<evidence type="ECO:0000250" key="1">
    <source>
        <dbReference type="UniProtKB" id="Q6IAA8"/>
    </source>
</evidence>
<evidence type="ECO:0000256" key="2">
    <source>
        <dbReference type="SAM" id="MobiDB-lite"/>
    </source>
</evidence>
<evidence type="ECO:0000305" key="3"/>
<keyword id="KW-0967">Endosome</keyword>
<keyword id="KW-0449">Lipoprotein</keyword>
<keyword id="KW-0458">Lysosome</keyword>
<keyword id="KW-0472">Membrane</keyword>
<keyword id="KW-0519">Myristate</keyword>
<keyword id="KW-0564">Palmitate</keyword>
<keyword id="KW-1185">Reference proteome</keyword>
<proteinExistence type="evidence at transcript level"/>
<organism>
    <name type="scientific">Xenopus laevis</name>
    <name type="common">African clawed frog</name>
    <dbReference type="NCBI Taxonomy" id="8355"/>
    <lineage>
        <taxon>Eukaryota</taxon>
        <taxon>Metazoa</taxon>
        <taxon>Chordata</taxon>
        <taxon>Craniata</taxon>
        <taxon>Vertebrata</taxon>
        <taxon>Euteleostomi</taxon>
        <taxon>Amphibia</taxon>
        <taxon>Batrachia</taxon>
        <taxon>Anura</taxon>
        <taxon>Pipoidea</taxon>
        <taxon>Pipidae</taxon>
        <taxon>Xenopodinae</taxon>
        <taxon>Xenopus</taxon>
        <taxon>Xenopus</taxon>
    </lineage>
</organism>
<reference key="1">
    <citation type="submission" date="2003-06" db="EMBL/GenBank/DDBJ databases">
        <authorList>
            <consortium name="NIH - Xenopus Gene Collection (XGC) project"/>
        </authorList>
    </citation>
    <scope>NUCLEOTIDE SEQUENCE [LARGE SCALE MRNA]</scope>
    <source>
        <tissue>Tadpole</tissue>
    </source>
</reference>
<dbReference type="EMBL" id="BC054238">
    <property type="protein sequence ID" value="AAH54238.1"/>
    <property type="molecule type" value="mRNA"/>
</dbReference>
<dbReference type="RefSeq" id="NP_001080198.1">
    <property type="nucleotide sequence ID" value="NM_001086729.1"/>
</dbReference>
<dbReference type="SMR" id="Q7SYW7"/>
<dbReference type="DNASU" id="379890"/>
<dbReference type="GeneID" id="379890"/>
<dbReference type="KEGG" id="xla:379890"/>
<dbReference type="AGR" id="Xenbase:XB-GENE-6079175"/>
<dbReference type="CTD" id="379890"/>
<dbReference type="Xenbase" id="XB-GENE-6079175">
    <property type="gene designation" value="lamtor1.S"/>
</dbReference>
<dbReference type="OMA" id="MGCCYSF"/>
<dbReference type="OrthoDB" id="5562028at2759"/>
<dbReference type="Proteomes" id="UP000186698">
    <property type="component" value="Chromosome 2S"/>
</dbReference>
<dbReference type="Bgee" id="379890">
    <property type="expression patterns" value="Expressed in internal ear and 19 other cell types or tissues"/>
</dbReference>
<dbReference type="GO" id="GO:0031902">
    <property type="term" value="C:late endosome membrane"/>
    <property type="evidence" value="ECO:0000250"/>
    <property type="project" value="UniProtKB"/>
</dbReference>
<dbReference type="GO" id="GO:0005765">
    <property type="term" value="C:lysosomal membrane"/>
    <property type="evidence" value="ECO:0000250"/>
    <property type="project" value="UniProtKB"/>
</dbReference>
<dbReference type="GO" id="GO:0005764">
    <property type="term" value="C:lysosome"/>
    <property type="evidence" value="ECO:0000250"/>
    <property type="project" value="UniProtKB"/>
</dbReference>
<dbReference type="GO" id="GO:0045121">
    <property type="term" value="C:membrane raft"/>
    <property type="evidence" value="ECO:0000250"/>
    <property type="project" value="UniProtKB"/>
</dbReference>
<dbReference type="GO" id="GO:0071986">
    <property type="term" value="C:Ragulator complex"/>
    <property type="evidence" value="ECO:0000250"/>
    <property type="project" value="UniProtKB"/>
</dbReference>
<dbReference type="GO" id="GO:0005085">
    <property type="term" value="F:guanyl-nucleotide exchange factor activity"/>
    <property type="evidence" value="ECO:0007669"/>
    <property type="project" value="TreeGrafter"/>
</dbReference>
<dbReference type="GO" id="GO:0043495">
    <property type="term" value="F:protein-membrane adaptor activity"/>
    <property type="evidence" value="ECO:0000250"/>
    <property type="project" value="UniProtKB"/>
</dbReference>
<dbReference type="GO" id="GO:0071230">
    <property type="term" value="P:cellular response to amino acid stimulus"/>
    <property type="evidence" value="ECO:0000250"/>
    <property type="project" value="UniProtKB"/>
</dbReference>
<dbReference type="GO" id="GO:0042632">
    <property type="term" value="P:cholesterol homeostasis"/>
    <property type="evidence" value="ECO:0000250"/>
    <property type="project" value="UniProtKB"/>
</dbReference>
<dbReference type="GO" id="GO:0016197">
    <property type="term" value="P:endosomal transport"/>
    <property type="evidence" value="ECO:0000250"/>
    <property type="project" value="UniProtKB"/>
</dbReference>
<dbReference type="GO" id="GO:0007032">
    <property type="term" value="P:endosome organization"/>
    <property type="evidence" value="ECO:0000250"/>
    <property type="project" value="UniProtKB"/>
</dbReference>
<dbReference type="GO" id="GO:0032418">
    <property type="term" value="P:lysosome localization"/>
    <property type="evidence" value="ECO:0000250"/>
    <property type="project" value="UniProtKB"/>
</dbReference>
<dbReference type="GO" id="GO:0007040">
    <property type="term" value="P:lysosome organization"/>
    <property type="evidence" value="ECO:0000250"/>
    <property type="project" value="UniProtKB"/>
</dbReference>
<dbReference type="GO" id="GO:0043410">
    <property type="term" value="P:positive regulation of MAPK cascade"/>
    <property type="evidence" value="ECO:0000250"/>
    <property type="project" value="UniProtKB"/>
</dbReference>
<dbReference type="GO" id="GO:0032008">
    <property type="term" value="P:positive regulation of TOR signaling"/>
    <property type="evidence" value="ECO:0000250"/>
    <property type="project" value="UniProtKB"/>
</dbReference>
<dbReference type="GO" id="GO:1904263">
    <property type="term" value="P:positive regulation of TORC1 signaling"/>
    <property type="evidence" value="ECO:0000250"/>
    <property type="project" value="UniProtKB"/>
</dbReference>
<dbReference type="GO" id="GO:0008104">
    <property type="term" value="P:protein localization"/>
    <property type="evidence" value="ECO:0000250"/>
    <property type="project" value="UniProtKB"/>
</dbReference>
<dbReference type="GO" id="GO:0072657">
    <property type="term" value="P:protein localization to membrane"/>
    <property type="evidence" value="ECO:0000250"/>
    <property type="project" value="UniProtKB"/>
</dbReference>
<dbReference type="GO" id="GO:0001558">
    <property type="term" value="P:regulation of cell growth"/>
    <property type="evidence" value="ECO:0000250"/>
    <property type="project" value="UniProtKB"/>
</dbReference>
<dbReference type="GO" id="GO:0010874">
    <property type="term" value="P:regulation of cholesterol efflux"/>
    <property type="evidence" value="ECO:0000250"/>
    <property type="project" value="UniProtKB"/>
</dbReference>
<dbReference type="GO" id="GO:0060620">
    <property type="term" value="P:regulation of cholesterol import"/>
    <property type="evidence" value="ECO:0000250"/>
    <property type="project" value="UniProtKB"/>
</dbReference>
<dbReference type="GO" id="GO:0001919">
    <property type="term" value="P:regulation of receptor recycling"/>
    <property type="evidence" value="ECO:0000250"/>
    <property type="project" value="UniProtKB"/>
</dbReference>
<dbReference type="InterPro" id="IPR028209">
    <property type="entry name" value="LAMTOR1/MEH1"/>
</dbReference>
<dbReference type="PANTHER" id="PTHR13401">
    <property type="entry name" value="RAGULATOR COMPLEX PROTEIN LAMTOR1"/>
    <property type="match status" value="1"/>
</dbReference>
<dbReference type="PANTHER" id="PTHR13401:SF2">
    <property type="entry name" value="RAGULATOR COMPLEX PROTEIN LAMTOR1"/>
    <property type="match status" value="1"/>
</dbReference>
<dbReference type="Pfam" id="PF15454">
    <property type="entry name" value="LAMTOR"/>
    <property type="match status" value="1"/>
</dbReference>
<dbReference type="SMART" id="SM01262">
    <property type="entry name" value="LAMTOR"/>
    <property type="match status" value="1"/>
</dbReference>
<sequence>MGCCYSGETDTGKGDQGEREHLLPQNQSLPNNKQNGSEQNPTNNPSARTDEQAMLSRILAKTAQNIIDVSAVESQGMEQHECMDRARQYSTRLAKLSSNLMDWKNVPPLPSLTSQPHQILASDPVPFTDIQQVSKIAAYAFSALSQIRVDAKEDLVVQFGIP</sequence>
<feature type="initiator methionine" description="Removed" evidence="1">
    <location>
        <position position="1"/>
    </location>
</feature>
<feature type="chain" id="PRO_0000274296" description="Ragulator complex protein LAMTOR1">
    <location>
        <begin position="2"/>
        <end position="162"/>
    </location>
</feature>
<feature type="region of interest" description="Disordered" evidence="2">
    <location>
        <begin position="1"/>
        <end position="50"/>
    </location>
</feature>
<feature type="compositionally biased region" description="Basic and acidic residues" evidence="2">
    <location>
        <begin position="10"/>
        <end position="22"/>
    </location>
</feature>
<feature type="compositionally biased region" description="Polar residues" evidence="2">
    <location>
        <begin position="24"/>
        <end position="47"/>
    </location>
</feature>
<feature type="lipid moiety-binding region" description="N-myristoyl glycine" evidence="1">
    <location>
        <position position="2"/>
    </location>
</feature>
<feature type="lipid moiety-binding region" description="S-palmitoyl cysteine" evidence="1">
    <location>
        <position position="3"/>
    </location>
</feature>
<feature type="lipid moiety-binding region" description="S-palmitoyl cysteine" evidence="1">
    <location>
        <position position="4"/>
    </location>
</feature>
<name>LTOR1_XENLA</name>
<gene>
    <name type="primary">lamtor1</name>
</gene>
<protein>
    <recommendedName>
        <fullName>Ragulator complex protein LAMTOR1</fullName>
    </recommendedName>
    <alternativeName>
        <fullName>Late endosomal/lysosomal adaptor and MAPK and MTOR activator 1</fullName>
    </alternativeName>
</protein>
<comment type="function">
    <text evidence="1">Key component of the Ragulator complex, a multiprotein complex involved in amino acid sensing and activation of mTORC1, a signaling complex promoting cell growth in response to growth factors, energy levels, and amino acids. Activated by amino acids through a mechanism involving the lysosomal V-ATPase, the Ragulator plays a dual role for the small GTPases Rag (RagA/RRAGA, RagB/RRAGB, RagC/RRAGC and/or RagD/RRAGD): it (1) acts as a guanine nucleotide exchange factor (GEF), activating the small GTPases Rag and (2) mediates recruitment of Rag GTPases to the lysosome membrane. Activated Ragulator and Rag GTPases function as a scaffold recruiting mTORC1 to lysosomes where it is in turn activated. LAMTOR1 is directly responsible for anchoring the Ragulator complex to the lysosomal membrane. LAMTOR1 wraps around the other subunits of the Ragulator complex to hold them in place and interacts with the Rag GTPases, thereby playing a key role in the recruitment of the mTORC1 complex to lysosomes.</text>
</comment>
<comment type="subunit">
    <text evidence="1">Part of the Ragulator complex composed of lamtor1, lamtor2, lamtor3, lamtor4 and lamtor5. The Ragulator complex interacts with slc38a9; the probable amino acid sensor. Component of the lysosomal folliculin complex (LFC).</text>
</comment>
<comment type="subcellular location">
    <subcellularLocation>
        <location evidence="1">Lysosome membrane</location>
        <topology evidence="1">Lipid-anchor</topology>
        <orientation evidence="1">Cytoplasmic side</orientation>
    </subcellularLocation>
    <subcellularLocation>
        <location evidence="1">Late endosome membrane</location>
        <topology evidence="1">Lipid-anchor</topology>
        <orientation evidence="1">Cytoplasmic side</orientation>
    </subcellularLocation>
    <text evidence="1">Recruited to lysosome and endosome membranes through N-terminal myristoylation and palmitoylation.</text>
</comment>
<comment type="PTM">
    <text evidence="1">N-terminal myristoylation and palmitoylation mediates its recruitment to lysosome membranes, thereby promoting localization of the Ragulator complex to lysosomes. N-myristoylation by NMT1 is required for palmitoylation at Cys-3 and Cys-4.</text>
</comment>
<comment type="similarity">
    <text evidence="3">Belongs to the LAMTOR1 family.</text>
</comment>
<accession>Q7SYW7</accession>